<keyword id="KW-0067">ATP-binding</keyword>
<keyword id="KW-0547">Nucleotide-binding</keyword>
<keyword id="KW-0548">Nucleotidyltransferase</keyword>
<keyword id="KW-1185">Reference proteome</keyword>
<keyword id="KW-0808">Transferase</keyword>
<dbReference type="EC" id="2.7.7.4" evidence="1"/>
<dbReference type="EMBL" id="CP000113">
    <property type="protein sequence ID" value="ABF91544.1"/>
    <property type="molecule type" value="Genomic_DNA"/>
</dbReference>
<dbReference type="RefSeq" id="WP_011552412.1">
    <property type="nucleotide sequence ID" value="NC_008095.1"/>
</dbReference>
<dbReference type="SMR" id="Q1D9W6"/>
<dbReference type="STRING" id="246197.MXAN_2337"/>
<dbReference type="EnsemblBacteria" id="ABF91544">
    <property type="protein sequence ID" value="ABF91544"/>
    <property type="gene ID" value="MXAN_2337"/>
</dbReference>
<dbReference type="GeneID" id="41359723"/>
<dbReference type="KEGG" id="mxa:MXAN_2337"/>
<dbReference type="eggNOG" id="COG0175">
    <property type="taxonomic scope" value="Bacteria"/>
</dbReference>
<dbReference type="HOGENOM" id="CLU_043026_0_0_7"/>
<dbReference type="OrthoDB" id="9772604at2"/>
<dbReference type="UniPathway" id="UPA00140">
    <property type="reaction ID" value="UER00204"/>
</dbReference>
<dbReference type="Proteomes" id="UP000002402">
    <property type="component" value="Chromosome"/>
</dbReference>
<dbReference type="GO" id="GO:0005524">
    <property type="term" value="F:ATP binding"/>
    <property type="evidence" value="ECO:0007669"/>
    <property type="project" value="UniProtKB-KW"/>
</dbReference>
<dbReference type="GO" id="GO:0004781">
    <property type="term" value="F:sulfate adenylyltransferase (ATP) activity"/>
    <property type="evidence" value="ECO:0007669"/>
    <property type="project" value="UniProtKB-UniRule"/>
</dbReference>
<dbReference type="GO" id="GO:0070814">
    <property type="term" value="P:hydrogen sulfide biosynthetic process"/>
    <property type="evidence" value="ECO:0007669"/>
    <property type="project" value="UniProtKB-UniRule"/>
</dbReference>
<dbReference type="GO" id="GO:0000103">
    <property type="term" value="P:sulfate assimilation"/>
    <property type="evidence" value="ECO:0007669"/>
    <property type="project" value="UniProtKB-UniRule"/>
</dbReference>
<dbReference type="FunFam" id="3.40.50.620:FF:000002">
    <property type="entry name" value="Sulfate adenylyltransferase subunit 2"/>
    <property type="match status" value="1"/>
</dbReference>
<dbReference type="Gene3D" id="3.40.50.620">
    <property type="entry name" value="HUPs"/>
    <property type="match status" value="1"/>
</dbReference>
<dbReference type="HAMAP" id="MF_00064">
    <property type="entry name" value="Sulf_adenylyltr_sub2"/>
    <property type="match status" value="1"/>
</dbReference>
<dbReference type="InterPro" id="IPR002500">
    <property type="entry name" value="PAPS_reduct_dom"/>
</dbReference>
<dbReference type="InterPro" id="IPR014729">
    <property type="entry name" value="Rossmann-like_a/b/a_fold"/>
</dbReference>
<dbReference type="InterPro" id="IPR011784">
    <property type="entry name" value="SO4_adenylTrfase_ssu"/>
</dbReference>
<dbReference type="InterPro" id="IPR050128">
    <property type="entry name" value="Sulfate_adenylyltrnsfr_sub2"/>
</dbReference>
<dbReference type="NCBIfam" id="TIGR02039">
    <property type="entry name" value="CysD"/>
    <property type="match status" value="1"/>
</dbReference>
<dbReference type="NCBIfam" id="NF003587">
    <property type="entry name" value="PRK05253.1"/>
    <property type="match status" value="1"/>
</dbReference>
<dbReference type="NCBIfam" id="NF009214">
    <property type="entry name" value="PRK12563.1"/>
    <property type="match status" value="1"/>
</dbReference>
<dbReference type="PANTHER" id="PTHR43196">
    <property type="entry name" value="SULFATE ADENYLYLTRANSFERASE SUBUNIT 2"/>
    <property type="match status" value="1"/>
</dbReference>
<dbReference type="PANTHER" id="PTHR43196:SF1">
    <property type="entry name" value="SULFATE ADENYLYLTRANSFERASE SUBUNIT 2"/>
    <property type="match status" value="1"/>
</dbReference>
<dbReference type="Pfam" id="PF01507">
    <property type="entry name" value="PAPS_reduct"/>
    <property type="match status" value="1"/>
</dbReference>
<dbReference type="PIRSF" id="PIRSF002936">
    <property type="entry name" value="CysDAde_trans"/>
    <property type="match status" value="1"/>
</dbReference>
<dbReference type="SUPFAM" id="SSF52402">
    <property type="entry name" value="Adenine nucleotide alpha hydrolases-like"/>
    <property type="match status" value="1"/>
</dbReference>
<organism>
    <name type="scientific">Myxococcus xanthus (strain DK1622)</name>
    <dbReference type="NCBI Taxonomy" id="246197"/>
    <lineage>
        <taxon>Bacteria</taxon>
        <taxon>Pseudomonadati</taxon>
        <taxon>Myxococcota</taxon>
        <taxon>Myxococcia</taxon>
        <taxon>Myxococcales</taxon>
        <taxon>Cystobacterineae</taxon>
        <taxon>Myxococcaceae</taxon>
        <taxon>Myxococcus</taxon>
    </lineage>
</organism>
<evidence type="ECO:0000255" key="1">
    <source>
        <dbReference type="HAMAP-Rule" id="MF_00064"/>
    </source>
</evidence>
<name>CYSD_MYXXD</name>
<protein>
    <recommendedName>
        <fullName evidence="1">Sulfate adenylyltransferase subunit 2</fullName>
        <ecNumber evidence="1">2.7.7.4</ecNumber>
    </recommendedName>
    <alternativeName>
        <fullName evidence="1">ATP-sulfurylase small subunit</fullName>
    </alternativeName>
    <alternativeName>
        <fullName evidence="1">Sulfate adenylate transferase</fullName>
        <shortName evidence="1">SAT</shortName>
    </alternativeName>
</protein>
<proteinExistence type="inferred from homology"/>
<gene>
    <name evidence="1" type="primary">cysD</name>
    <name type="ordered locus">MXAN_2337</name>
</gene>
<comment type="function">
    <text evidence="1">With CysN forms the ATP sulfurylase (ATPS) that catalyzes the adenylation of sulfate producing adenosine 5'-phosphosulfate (APS) and diphosphate, the first enzymatic step in sulfur assimilation pathway. APS synthesis involves the formation of a high-energy phosphoric-sulfuric acid anhydride bond driven by GTP hydrolysis by CysN coupled to ATP hydrolysis by CysD.</text>
</comment>
<comment type="catalytic activity">
    <reaction evidence="1">
        <text>sulfate + ATP + H(+) = adenosine 5'-phosphosulfate + diphosphate</text>
        <dbReference type="Rhea" id="RHEA:18133"/>
        <dbReference type="ChEBI" id="CHEBI:15378"/>
        <dbReference type="ChEBI" id="CHEBI:16189"/>
        <dbReference type="ChEBI" id="CHEBI:30616"/>
        <dbReference type="ChEBI" id="CHEBI:33019"/>
        <dbReference type="ChEBI" id="CHEBI:58243"/>
        <dbReference type="EC" id="2.7.7.4"/>
    </reaction>
</comment>
<comment type="pathway">
    <text evidence="1">Sulfur metabolism; hydrogen sulfide biosynthesis; sulfite from sulfate: step 1/3.</text>
</comment>
<comment type="subunit">
    <text evidence="1">Heterodimer composed of CysD, the smaller subunit, and CysN.</text>
</comment>
<comment type="similarity">
    <text evidence="1">Belongs to the PAPS reductase family. CysD subfamily.</text>
</comment>
<feature type="chain" id="PRO_0000340208" description="Sulfate adenylyltransferase subunit 2">
    <location>
        <begin position="1"/>
        <end position="305"/>
    </location>
</feature>
<sequence>MSEHTFARASHLSELEAESIHILRETVAEFANPVMLYSIGKDSQVLLHLARKAFHPAPLPFPLLHVDTTWKFRDMYAFRDAFVARHGLRLIIHRNQRALAEGINPFDHGSQKYTHAMKTQALLEALAAHGFDAAFGGARRDEEKSRAKERVFSFRDRHGQWDPRRQRPELWNLFNGRVDAGESMRVFPLSNWTELDVWHYVLRERIPVVPLYFAAERPVIDRGGTLLMVDDERMRLRPGEKPEIRRVRFRTLGCYPLSGAIESSATTVETVIHEMVNARQSERQGRLIDHDEEGSMELKKREGYF</sequence>
<reference key="1">
    <citation type="journal article" date="2006" name="Proc. Natl. Acad. Sci. U.S.A.">
        <title>Evolution of sensory complexity recorded in a myxobacterial genome.</title>
        <authorList>
            <person name="Goldman B.S."/>
            <person name="Nierman W.C."/>
            <person name="Kaiser D."/>
            <person name="Slater S.C."/>
            <person name="Durkin A.S."/>
            <person name="Eisen J.A."/>
            <person name="Ronning C.M."/>
            <person name="Barbazuk W.B."/>
            <person name="Blanchard M."/>
            <person name="Field C."/>
            <person name="Halling C."/>
            <person name="Hinkle G."/>
            <person name="Iartchuk O."/>
            <person name="Kim H.S."/>
            <person name="Mackenzie C."/>
            <person name="Madupu R."/>
            <person name="Miller N."/>
            <person name="Shvartsbeyn A."/>
            <person name="Sullivan S.A."/>
            <person name="Vaudin M."/>
            <person name="Wiegand R."/>
            <person name="Kaplan H.B."/>
        </authorList>
    </citation>
    <scope>NUCLEOTIDE SEQUENCE [LARGE SCALE GENOMIC DNA]</scope>
    <source>
        <strain>DK1622</strain>
    </source>
</reference>
<accession>Q1D9W6</accession>